<accession>O83966</accession>
<feature type="chain" id="PRO_0000202371" description="Uncharacterized protein TP_1001">
    <location>
        <begin position="1"/>
        <end position="393"/>
    </location>
</feature>
<keyword id="KW-1185">Reference proteome</keyword>
<reference key="1">
    <citation type="journal article" date="1998" name="Science">
        <title>Complete genome sequence of Treponema pallidum, the syphilis spirochete.</title>
        <authorList>
            <person name="Fraser C.M."/>
            <person name="Norris S.J."/>
            <person name="Weinstock G.M."/>
            <person name="White O."/>
            <person name="Sutton G.G."/>
            <person name="Dodson R.J."/>
            <person name="Gwinn M.L."/>
            <person name="Hickey E.K."/>
            <person name="Clayton R.A."/>
            <person name="Ketchum K.A."/>
            <person name="Sodergren E."/>
            <person name="Hardham J.M."/>
            <person name="McLeod M.P."/>
            <person name="Salzberg S.L."/>
            <person name="Peterson J.D."/>
            <person name="Khalak H.G."/>
            <person name="Richardson D.L."/>
            <person name="Howell J.K."/>
            <person name="Chidambaram M."/>
            <person name="Utterback T.R."/>
            <person name="McDonald L.A."/>
            <person name="Artiach P."/>
            <person name="Bowman C."/>
            <person name="Cotton M.D."/>
            <person name="Fujii C."/>
            <person name="Garland S.A."/>
            <person name="Hatch B."/>
            <person name="Horst K."/>
            <person name="Roberts K.M."/>
            <person name="Sandusky M."/>
            <person name="Weidman J.F."/>
            <person name="Smith H.O."/>
            <person name="Venter J.C."/>
        </authorList>
    </citation>
    <scope>NUCLEOTIDE SEQUENCE [LARGE SCALE GENOMIC DNA]</scope>
    <source>
        <strain>Nichols</strain>
    </source>
</reference>
<proteinExistence type="predicted"/>
<protein>
    <recommendedName>
        <fullName>Uncharacterized protein TP_1001</fullName>
    </recommendedName>
</protein>
<dbReference type="EMBL" id="AE000520">
    <property type="protein sequence ID" value="AAC65958.1"/>
    <property type="molecule type" value="Genomic_DNA"/>
</dbReference>
<dbReference type="PIR" id="C71254">
    <property type="entry name" value="C71254"/>
</dbReference>
<dbReference type="RefSeq" id="WP_010882445.1">
    <property type="nucleotide sequence ID" value="NC_021490.2"/>
</dbReference>
<dbReference type="STRING" id="243276.TP_1001"/>
<dbReference type="EnsemblBacteria" id="AAC65958">
    <property type="protein sequence ID" value="AAC65958"/>
    <property type="gene ID" value="TP_1001"/>
</dbReference>
<dbReference type="KEGG" id="tpa:TP_1001"/>
<dbReference type="KEGG" id="tpw:TPANIC_1001"/>
<dbReference type="eggNOG" id="ENOG5033P4X">
    <property type="taxonomic scope" value="Bacteria"/>
</dbReference>
<dbReference type="HOGENOM" id="CLU_787409_0_0_12"/>
<dbReference type="OrthoDB" id="369743at2"/>
<dbReference type="Proteomes" id="UP000000811">
    <property type="component" value="Chromosome"/>
</dbReference>
<organism>
    <name type="scientific">Treponema pallidum (strain Nichols)</name>
    <dbReference type="NCBI Taxonomy" id="243276"/>
    <lineage>
        <taxon>Bacteria</taxon>
        <taxon>Pseudomonadati</taxon>
        <taxon>Spirochaetota</taxon>
        <taxon>Spirochaetia</taxon>
        <taxon>Spirochaetales</taxon>
        <taxon>Treponemataceae</taxon>
        <taxon>Treponema</taxon>
    </lineage>
</organism>
<sequence>MQSYEGGVWLTCDIMGVSLFLVREHVVMWDLHRALCAGLLSVLLYGGCSSARDFVHVMKTAGNEVALVHYALQGDCIVFGFRGEVSDVVARVYRAEGVVSEEMSDELLQSFTDEIPSALSRIAVPAAYQESVDAARERLSFFAVRFLQKPHVGQQVVLRGSAQDVAHQKHDFVLPFEGINTQPARLEISEVRPLYGNKRSEFVELLVVESGNLLGITITNVGGKGNRCDYHFPAAQVRVGERVVLHWRKQDPASCDELSAETVSAGSQACARARDFWGQERSIPGRNPNAIVVKESANGKIQDALLFFNTHVKKGKAPTFRWAFPEIEAASRLALEQGAWLSTHEHFPLRESHFFQCDLTPAKSIALKRKRGAGRSAADCFVLKKATMGLPNQ</sequence>
<name>Y1001_TREPA</name>
<gene>
    <name type="ordered locus">TP_1001</name>
</gene>